<dbReference type="EC" id="6.1.1.6" evidence="1"/>
<dbReference type="EMBL" id="AE013218">
    <property type="protein sequence ID" value="AAM67966.1"/>
    <property type="molecule type" value="Genomic_DNA"/>
</dbReference>
<dbReference type="RefSeq" id="WP_011053933.1">
    <property type="nucleotide sequence ID" value="NC_004061.1"/>
</dbReference>
<dbReference type="SMR" id="Q8K9C5"/>
<dbReference type="STRING" id="198804.BUsg_422"/>
<dbReference type="GeneID" id="93003894"/>
<dbReference type="KEGG" id="bas:BUsg_422"/>
<dbReference type="eggNOG" id="COG1190">
    <property type="taxonomic scope" value="Bacteria"/>
</dbReference>
<dbReference type="HOGENOM" id="CLU_008255_6_0_6"/>
<dbReference type="Proteomes" id="UP000000416">
    <property type="component" value="Chromosome"/>
</dbReference>
<dbReference type="GO" id="GO:0005829">
    <property type="term" value="C:cytosol"/>
    <property type="evidence" value="ECO:0007669"/>
    <property type="project" value="TreeGrafter"/>
</dbReference>
<dbReference type="GO" id="GO:0005524">
    <property type="term" value="F:ATP binding"/>
    <property type="evidence" value="ECO:0007669"/>
    <property type="project" value="UniProtKB-UniRule"/>
</dbReference>
<dbReference type="GO" id="GO:0004824">
    <property type="term" value="F:lysine-tRNA ligase activity"/>
    <property type="evidence" value="ECO:0007669"/>
    <property type="project" value="UniProtKB-UniRule"/>
</dbReference>
<dbReference type="GO" id="GO:0000287">
    <property type="term" value="F:magnesium ion binding"/>
    <property type="evidence" value="ECO:0007669"/>
    <property type="project" value="UniProtKB-UniRule"/>
</dbReference>
<dbReference type="GO" id="GO:0000049">
    <property type="term" value="F:tRNA binding"/>
    <property type="evidence" value="ECO:0007669"/>
    <property type="project" value="TreeGrafter"/>
</dbReference>
<dbReference type="GO" id="GO:0006430">
    <property type="term" value="P:lysyl-tRNA aminoacylation"/>
    <property type="evidence" value="ECO:0007669"/>
    <property type="project" value="UniProtKB-UniRule"/>
</dbReference>
<dbReference type="CDD" id="cd00775">
    <property type="entry name" value="LysRS_core"/>
    <property type="match status" value="1"/>
</dbReference>
<dbReference type="CDD" id="cd04322">
    <property type="entry name" value="LysRS_N"/>
    <property type="match status" value="1"/>
</dbReference>
<dbReference type="FunFam" id="2.40.50.140:FF:000024">
    <property type="entry name" value="Lysine--tRNA ligase"/>
    <property type="match status" value="1"/>
</dbReference>
<dbReference type="Gene3D" id="3.30.930.10">
    <property type="entry name" value="Bira Bifunctional Protein, Domain 2"/>
    <property type="match status" value="1"/>
</dbReference>
<dbReference type="Gene3D" id="2.40.50.140">
    <property type="entry name" value="Nucleic acid-binding proteins"/>
    <property type="match status" value="1"/>
</dbReference>
<dbReference type="HAMAP" id="MF_00252">
    <property type="entry name" value="Lys_tRNA_synth_class2"/>
    <property type="match status" value="1"/>
</dbReference>
<dbReference type="InterPro" id="IPR004364">
    <property type="entry name" value="Aa-tRNA-synt_II"/>
</dbReference>
<dbReference type="InterPro" id="IPR006195">
    <property type="entry name" value="aa-tRNA-synth_II"/>
</dbReference>
<dbReference type="InterPro" id="IPR045864">
    <property type="entry name" value="aa-tRNA-synth_II/BPL/LPL"/>
</dbReference>
<dbReference type="InterPro" id="IPR002313">
    <property type="entry name" value="Lys-tRNA-ligase_II"/>
</dbReference>
<dbReference type="InterPro" id="IPR044136">
    <property type="entry name" value="Lys-tRNA-ligase_II_N"/>
</dbReference>
<dbReference type="InterPro" id="IPR018149">
    <property type="entry name" value="Lys-tRNA-synth_II_C"/>
</dbReference>
<dbReference type="InterPro" id="IPR012340">
    <property type="entry name" value="NA-bd_OB-fold"/>
</dbReference>
<dbReference type="InterPro" id="IPR004365">
    <property type="entry name" value="NA-bd_OB_tRNA"/>
</dbReference>
<dbReference type="NCBIfam" id="TIGR00499">
    <property type="entry name" value="lysS_bact"/>
    <property type="match status" value="1"/>
</dbReference>
<dbReference type="NCBIfam" id="NF001756">
    <property type="entry name" value="PRK00484.1"/>
    <property type="match status" value="1"/>
</dbReference>
<dbReference type="PANTHER" id="PTHR42918:SF15">
    <property type="entry name" value="LYSINE--TRNA LIGASE, CHLOROPLASTIC_MITOCHONDRIAL"/>
    <property type="match status" value="1"/>
</dbReference>
<dbReference type="PANTHER" id="PTHR42918">
    <property type="entry name" value="LYSYL-TRNA SYNTHETASE"/>
    <property type="match status" value="1"/>
</dbReference>
<dbReference type="Pfam" id="PF00152">
    <property type="entry name" value="tRNA-synt_2"/>
    <property type="match status" value="1"/>
</dbReference>
<dbReference type="Pfam" id="PF01336">
    <property type="entry name" value="tRNA_anti-codon"/>
    <property type="match status" value="1"/>
</dbReference>
<dbReference type="PRINTS" id="PR00982">
    <property type="entry name" value="TRNASYNTHLYS"/>
</dbReference>
<dbReference type="SUPFAM" id="SSF55681">
    <property type="entry name" value="Class II aaRS and biotin synthetases"/>
    <property type="match status" value="1"/>
</dbReference>
<dbReference type="SUPFAM" id="SSF50249">
    <property type="entry name" value="Nucleic acid-binding proteins"/>
    <property type="match status" value="1"/>
</dbReference>
<dbReference type="PROSITE" id="PS50862">
    <property type="entry name" value="AA_TRNA_LIGASE_II"/>
    <property type="match status" value="1"/>
</dbReference>
<gene>
    <name evidence="1" type="primary">lysS</name>
    <name type="ordered locus">BUsg_422</name>
</gene>
<evidence type="ECO:0000255" key="1">
    <source>
        <dbReference type="HAMAP-Rule" id="MF_00252"/>
    </source>
</evidence>
<name>SYK_BUCAP</name>
<protein>
    <recommendedName>
        <fullName evidence="1">Lysine--tRNA ligase</fullName>
        <ecNumber evidence="1">6.1.1.6</ecNumber>
    </recommendedName>
    <alternativeName>
        <fullName evidence="1">Lysyl-tRNA synthetase</fullName>
        <shortName evidence="1">LysRS</shortName>
    </alternativeName>
</protein>
<sequence>MIKKTDLNNNIFQKEKQIRKEKLINMKKNGFSFPNSFKKNTNSIKIHQEYENKTINELKVLNVEVTIAGRMIQRRIMGKASFFTLQDMEGKIQIYTREKEITSDFYNNHFKKWDIGDILGIEGILFKTKTGELSIFSKKLKILTKSLRPLPDKFHGLSNQEKRYRKRYLDLISNNQLFNIFKNRSKIIRFIRNFMIENNFLEVETPMLHNIPGGANARPFITYHNEINEEMYLRIAPELYLKQLIVGGFERIFELNRNFRNEGVSARHNPEFTMMEAYIAYSNYEDMMNFTENLLKNIIKSICGKSEIKYNKYYLNFNIPFKKLTMKESILQFNSNICLSDLKNLQKIKKIANNIGIEIKDNWNIGYIENEIFEKTVEKNLIQPTFITEYPVEVSPLARRNDFNSNVTDRFELFIAGYEIGNGFSELNDSEDQKNRFLNQMKIAEKEKNKDMLYDENYIEALKYGLPPTSGLGIGIDRLIMILTNQISIRDVILFPTLRSFKK</sequence>
<accession>Q8K9C5</accession>
<keyword id="KW-0030">Aminoacyl-tRNA synthetase</keyword>
<keyword id="KW-0067">ATP-binding</keyword>
<keyword id="KW-0963">Cytoplasm</keyword>
<keyword id="KW-0436">Ligase</keyword>
<keyword id="KW-0460">Magnesium</keyword>
<keyword id="KW-0479">Metal-binding</keyword>
<keyword id="KW-0547">Nucleotide-binding</keyword>
<keyword id="KW-0648">Protein biosynthesis</keyword>
<reference key="1">
    <citation type="journal article" date="2002" name="Science">
        <title>50 million years of genomic stasis in endosymbiotic bacteria.</title>
        <authorList>
            <person name="Tamas I."/>
            <person name="Klasson L."/>
            <person name="Canbaeck B."/>
            <person name="Naeslund A.K."/>
            <person name="Eriksson A.-S."/>
            <person name="Wernegreen J.J."/>
            <person name="Sandstroem J.P."/>
            <person name="Moran N.A."/>
            <person name="Andersson S.G.E."/>
        </authorList>
    </citation>
    <scope>NUCLEOTIDE SEQUENCE [LARGE SCALE GENOMIC DNA]</scope>
    <source>
        <strain>Sg</strain>
    </source>
</reference>
<comment type="catalytic activity">
    <reaction evidence="1">
        <text>tRNA(Lys) + L-lysine + ATP = L-lysyl-tRNA(Lys) + AMP + diphosphate</text>
        <dbReference type="Rhea" id="RHEA:20792"/>
        <dbReference type="Rhea" id="RHEA-COMP:9696"/>
        <dbReference type="Rhea" id="RHEA-COMP:9697"/>
        <dbReference type="ChEBI" id="CHEBI:30616"/>
        <dbReference type="ChEBI" id="CHEBI:32551"/>
        <dbReference type="ChEBI" id="CHEBI:33019"/>
        <dbReference type="ChEBI" id="CHEBI:78442"/>
        <dbReference type="ChEBI" id="CHEBI:78529"/>
        <dbReference type="ChEBI" id="CHEBI:456215"/>
        <dbReference type="EC" id="6.1.1.6"/>
    </reaction>
</comment>
<comment type="cofactor">
    <cofactor evidence="1">
        <name>Mg(2+)</name>
        <dbReference type="ChEBI" id="CHEBI:18420"/>
    </cofactor>
    <text evidence="1">Binds 3 Mg(2+) ions per subunit.</text>
</comment>
<comment type="subunit">
    <text evidence="1">Homodimer.</text>
</comment>
<comment type="subcellular location">
    <subcellularLocation>
        <location evidence="1">Cytoplasm</location>
    </subcellularLocation>
</comment>
<comment type="similarity">
    <text evidence="1">Belongs to the class-II aminoacyl-tRNA synthetase family.</text>
</comment>
<proteinExistence type="inferred from homology"/>
<feature type="chain" id="PRO_0000152606" description="Lysine--tRNA ligase">
    <location>
        <begin position="1"/>
        <end position="503"/>
    </location>
</feature>
<feature type="binding site" evidence="1">
    <location>
        <position position="412"/>
    </location>
    <ligand>
        <name>Mg(2+)</name>
        <dbReference type="ChEBI" id="CHEBI:18420"/>
        <label>1</label>
    </ligand>
</feature>
<feature type="binding site" evidence="1">
    <location>
        <position position="419"/>
    </location>
    <ligand>
        <name>Mg(2+)</name>
        <dbReference type="ChEBI" id="CHEBI:18420"/>
        <label>1</label>
    </ligand>
</feature>
<feature type="binding site" evidence="1">
    <location>
        <position position="419"/>
    </location>
    <ligand>
        <name>Mg(2+)</name>
        <dbReference type="ChEBI" id="CHEBI:18420"/>
        <label>2</label>
    </ligand>
</feature>
<organism>
    <name type="scientific">Buchnera aphidicola subsp. Schizaphis graminum (strain Sg)</name>
    <dbReference type="NCBI Taxonomy" id="198804"/>
    <lineage>
        <taxon>Bacteria</taxon>
        <taxon>Pseudomonadati</taxon>
        <taxon>Pseudomonadota</taxon>
        <taxon>Gammaproteobacteria</taxon>
        <taxon>Enterobacterales</taxon>
        <taxon>Erwiniaceae</taxon>
        <taxon>Buchnera</taxon>
    </lineage>
</organism>